<organism>
    <name type="scientific">Nymphaea alba</name>
    <name type="common">White water-lily</name>
    <name type="synonym">Castalia alba</name>
    <dbReference type="NCBI Taxonomy" id="34301"/>
    <lineage>
        <taxon>Eukaryota</taxon>
        <taxon>Viridiplantae</taxon>
        <taxon>Streptophyta</taxon>
        <taxon>Embryophyta</taxon>
        <taxon>Tracheophyta</taxon>
        <taxon>Spermatophyta</taxon>
        <taxon>Magnoliopsida</taxon>
        <taxon>Nymphaeales</taxon>
        <taxon>Nymphaeaceae</taxon>
        <taxon>Nymphaea</taxon>
    </lineage>
</organism>
<dbReference type="EMBL" id="AJ627251">
    <property type="protein sequence ID" value="CAF28637.1"/>
    <property type="molecule type" value="Genomic_DNA"/>
</dbReference>
<dbReference type="EMBL" id="AJ627251">
    <property type="protein sequence ID" value="CAF28660.1"/>
    <property type="molecule type" value="Genomic_DNA"/>
</dbReference>
<dbReference type="SMR" id="Q6EVY6"/>
<dbReference type="GO" id="GO:0009507">
    <property type="term" value="C:chloroplast"/>
    <property type="evidence" value="ECO:0007669"/>
    <property type="project" value="UniProtKB-SubCell"/>
</dbReference>
<dbReference type="GO" id="GO:1990904">
    <property type="term" value="C:ribonucleoprotein complex"/>
    <property type="evidence" value="ECO:0007669"/>
    <property type="project" value="UniProtKB-KW"/>
</dbReference>
<dbReference type="GO" id="GO:0005840">
    <property type="term" value="C:ribosome"/>
    <property type="evidence" value="ECO:0007669"/>
    <property type="project" value="UniProtKB-KW"/>
</dbReference>
<dbReference type="GO" id="GO:0019843">
    <property type="term" value="F:rRNA binding"/>
    <property type="evidence" value="ECO:0007669"/>
    <property type="project" value="UniProtKB-UniRule"/>
</dbReference>
<dbReference type="GO" id="GO:0003735">
    <property type="term" value="F:structural constituent of ribosome"/>
    <property type="evidence" value="ECO:0007669"/>
    <property type="project" value="InterPro"/>
</dbReference>
<dbReference type="GO" id="GO:0006412">
    <property type="term" value="P:translation"/>
    <property type="evidence" value="ECO:0007669"/>
    <property type="project" value="UniProtKB-UniRule"/>
</dbReference>
<dbReference type="FunFam" id="3.30.70.330:FF:000002">
    <property type="entry name" value="50S ribosomal protein L23, chloroplastic"/>
    <property type="match status" value="1"/>
</dbReference>
<dbReference type="Gene3D" id="3.30.70.330">
    <property type="match status" value="1"/>
</dbReference>
<dbReference type="HAMAP" id="MF_01369_B">
    <property type="entry name" value="Ribosomal_uL23_B"/>
    <property type="match status" value="1"/>
</dbReference>
<dbReference type="InterPro" id="IPR012677">
    <property type="entry name" value="Nucleotide-bd_a/b_plait_sf"/>
</dbReference>
<dbReference type="InterPro" id="IPR013025">
    <property type="entry name" value="Ribosomal_uL23-like"/>
</dbReference>
<dbReference type="InterPro" id="IPR012678">
    <property type="entry name" value="Ribosomal_uL23/eL15/eS24_sf"/>
</dbReference>
<dbReference type="InterPro" id="IPR001014">
    <property type="entry name" value="Ribosomal_uL23_CS"/>
</dbReference>
<dbReference type="PANTHER" id="PTHR11620">
    <property type="entry name" value="60S RIBOSOMAL PROTEIN L23A"/>
    <property type="match status" value="1"/>
</dbReference>
<dbReference type="Pfam" id="PF00276">
    <property type="entry name" value="Ribosomal_L23"/>
    <property type="match status" value="1"/>
</dbReference>
<dbReference type="SUPFAM" id="SSF54189">
    <property type="entry name" value="Ribosomal proteins S24e, L23 and L15e"/>
    <property type="match status" value="1"/>
</dbReference>
<dbReference type="PROSITE" id="PS00050">
    <property type="entry name" value="RIBOSOMAL_L23"/>
    <property type="match status" value="1"/>
</dbReference>
<protein>
    <recommendedName>
        <fullName evidence="2">Large ribosomal subunit protein uL23cz/uL23cy</fullName>
    </recommendedName>
    <alternativeName>
        <fullName>50S ribosomal protein L23, chloroplastic</fullName>
    </alternativeName>
</protein>
<evidence type="ECO:0000250" key="1"/>
<evidence type="ECO:0000305" key="2"/>
<keyword id="KW-0150">Chloroplast</keyword>
<keyword id="KW-0934">Plastid</keyword>
<keyword id="KW-0687">Ribonucleoprotein</keyword>
<keyword id="KW-0689">Ribosomal protein</keyword>
<keyword id="KW-0694">RNA-binding</keyword>
<keyword id="KW-0699">rRNA-binding</keyword>
<geneLocation type="chloroplast"/>
<proteinExistence type="inferred from homology"/>
<comment type="function">
    <text evidence="1">Binds to 23S rRNA.</text>
</comment>
<comment type="subunit">
    <text evidence="1">Part of the 50S ribosomal subunit.</text>
</comment>
<comment type="subcellular location">
    <subcellularLocation>
        <location>Plastid</location>
        <location>Chloroplast</location>
    </subcellularLocation>
</comment>
<comment type="similarity">
    <text evidence="2">Belongs to the universal ribosomal protein uL23 family.</text>
</comment>
<sequence>MDGIKYAVFTEKSIRLLGNNQYTSNVESGSTRTEIKHWIELFFGVKVVAMNSHRLPGKGRRMGPIMRHTMHYRRMIITLQPGYSIPPLIEKRT</sequence>
<accession>Q6EVY6</accession>
<name>RK23_NYMAL</name>
<reference key="1">
    <citation type="journal article" date="2004" name="Mol. Biol. Evol.">
        <title>The chloroplast genome of Nymphaea alba: whole-genome analyses and the problem of identifying the most basal angiosperm.</title>
        <authorList>
            <person name="Goremykin V.V."/>
            <person name="Hirsch-Ernst K.I."/>
            <person name="Woelfl S."/>
            <person name="Hellwig F.H."/>
        </authorList>
    </citation>
    <scope>NUCLEOTIDE SEQUENCE [LARGE SCALE GENOMIC DNA]</scope>
</reference>
<gene>
    <name type="primary">rpl23-A</name>
</gene>
<gene>
    <name type="primary">rpl23-B</name>
</gene>
<feature type="chain" id="PRO_0000272912" description="Large ribosomal subunit protein uL23cz/uL23cy">
    <location>
        <begin position="1"/>
        <end position="93"/>
    </location>
</feature>